<sequence length="286" mass="33005">MADLEEQLSDEEKVRIAAKFIIHAPPGEFNEVFNDVRLLLNNDNLLREGAAHAFAQYNLDQFTPVKIEGYEEQVLITEHGDLGNGKFLDPKNRVSFKFDHLRKEATDPRPYEGENAIESWRHSVENAMRAYVKEHYPNGVCTVYGKTIDGQQTIIACIESHQFQAKNFWNGRWRSEWKFTITPSTTQVVGILKIQVHYYEDGNVQLVSHKDIQDSLTVSNEVQTAKEFIKIVEAAENEYQTAISENYQTMSDTTFKALRRQLPVTRTKIDWNKILSYKIGKEMQNA</sequence>
<reference key="1">
    <citation type="submission" date="2005-11" db="EMBL/GenBank/DDBJ databases">
        <title>NISC comparative sequencing initiative.</title>
        <authorList>
            <person name="Antonellis A."/>
            <person name="Ayele K."/>
            <person name="Benjamin B."/>
            <person name="Blakesley R.W."/>
            <person name="Boakye A."/>
            <person name="Bouffard G.G."/>
            <person name="Brinkley C."/>
            <person name="Brooks S."/>
            <person name="Chu G."/>
            <person name="Coleman H."/>
            <person name="Engle J."/>
            <person name="Gestole M."/>
            <person name="Greene A."/>
            <person name="Guan X."/>
            <person name="Gupta J."/>
            <person name="Haghighi P."/>
            <person name="Han J."/>
            <person name="Hansen N."/>
            <person name="Ho S.-L."/>
            <person name="Hu P."/>
            <person name="Hunter G."/>
            <person name="Hurle B."/>
            <person name="Idol J.R."/>
            <person name="Kwong P."/>
            <person name="Laric P."/>
            <person name="Larson S."/>
            <person name="Lee-Lin S.-Q."/>
            <person name="Legaspi R."/>
            <person name="Madden M."/>
            <person name="Maduro Q.L."/>
            <person name="Maduro V.B."/>
            <person name="Margulies E.H."/>
            <person name="Masiello C."/>
            <person name="Maskeri B."/>
            <person name="McDowell J."/>
            <person name="Mojidi H.A."/>
            <person name="Mullikin J.C."/>
            <person name="Oestreicher J.S."/>
            <person name="Park M."/>
            <person name="Portnoy M.E."/>
            <person name="Prasad A."/>
            <person name="Puri O."/>
            <person name="Reddix-Dugue N."/>
            <person name="Schandler K."/>
            <person name="Schueler M.G."/>
            <person name="Sison C."/>
            <person name="Stantripop S."/>
            <person name="Stephen E."/>
            <person name="Taye A."/>
            <person name="Thomas J.W."/>
            <person name="Thomas P.J."/>
            <person name="Tsipouri V."/>
            <person name="Ung L."/>
            <person name="Vogt J.L."/>
            <person name="Wetherby K.D."/>
            <person name="Young A."/>
            <person name="Green E.D."/>
        </authorList>
    </citation>
    <scope>NUCLEOTIDE SEQUENCE [LARGE SCALE GENOMIC DNA]</scope>
</reference>
<comment type="function">
    <text evidence="1">F-actin-capping proteins bind in a Ca(2+)-independent manner to the fast growing ends of actin filaments (barbed end) thereby blocking the exchange of subunits at these ends. Unlike other capping proteins (such as gelsolin and severin), these proteins do not sever actin filaments (By similarity).</text>
</comment>
<comment type="subunit">
    <text evidence="1 2">Component of the F-actin capping complex, composed of a heterodimer of an alpha and a beta subunit. Component of the WASH complex, composed of F-actin-capping protein subunit alpha (CAPZA1, CAPZA2 or CAPZA3), F-actin-capping protein subunit beta (CAPZB), WASHC1, WASHC2, WASHC3, WASHC4 and WASHC5. Interacts with RCSD1/CAPZIP (By similarity). Directly interacts with CRACD; this interaction decreases binding to actin (By similarity).</text>
</comment>
<comment type="similarity">
    <text evidence="3">Belongs to the F-actin-capping protein alpha subunit family.</text>
</comment>
<accession>Q2QL78</accession>
<keyword id="KW-0007">Acetylation</keyword>
<keyword id="KW-0117">Actin capping</keyword>
<keyword id="KW-0009">Actin-binding</keyword>
<keyword id="KW-0597">Phosphoprotein</keyword>
<feature type="initiator methionine" description="Removed" evidence="2">
    <location>
        <position position="1"/>
    </location>
</feature>
<feature type="chain" id="PRO_0000226307" description="F-actin-capping protein subunit alpha-2">
    <location>
        <begin position="2"/>
        <end position="286"/>
    </location>
</feature>
<feature type="modified residue" description="N-acetylalanine" evidence="2">
    <location>
        <position position="2"/>
    </location>
</feature>
<feature type="modified residue" description="Phosphoserine" evidence="2">
    <location>
        <position position="9"/>
    </location>
</feature>
<proteinExistence type="inferred from homology"/>
<evidence type="ECO:0000250" key="1"/>
<evidence type="ECO:0000250" key="2">
    <source>
        <dbReference type="UniProtKB" id="P47755"/>
    </source>
</evidence>
<evidence type="ECO:0000305" key="3"/>
<protein>
    <recommendedName>
        <fullName>F-actin-capping protein subunit alpha-2</fullName>
    </recommendedName>
    <alternativeName>
        <fullName>CapZ alpha-2</fullName>
    </alternativeName>
</protein>
<dbReference type="EMBL" id="DP000023">
    <property type="protein sequence ID" value="ABB89831.1"/>
    <property type="molecule type" value="Genomic_DNA"/>
</dbReference>
<dbReference type="SMR" id="Q2QL78"/>
<dbReference type="GO" id="GO:0030863">
    <property type="term" value="C:cortical cytoskeleton"/>
    <property type="evidence" value="ECO:0007669"/>
    <property type="project" value="TreeGrafter"/>
</dbReference>
<dbReference type="GO" id="GO:0008290">
    <property type="term" value="C:F-actin capping protein complex"/>
    <property type="evidence" value="ECO:0007669"/>
    <property type="project" value="InterPro"/>
</dbReference>
<dbReference type="GO" id="GO:0051015">
    <property type="term" value="F:actin filament binding"/>
    <property type="evidence" value="ECO:0007669"/>
    <property type="project" value="TreeGrafter"/>
</dbReference>
<dbReference type="GO" id="GO:0030036">
    <property type="term" value="P:actin cytoskeleton organization"/>
    <property type="evidence" value="ECO:0007669"/>
    <property type="project" value="TreeGrafter"/>
</dbReference>
<dbReference type="GO" id="GO:0051016">
    <property type="term" value="P:barbed-end actin filament capping"/>
    <property type="evidence" value="ECO:0007669"/>
    <property type="project" value="InterPro"/>
</dbReference>
<dbReference type="FunFam" id="3.30.1140.60:FF:000001">
    <property type="entry name" value="F-actin-capping protein subunit alpha"/>
    <property type="match status" value="1"/>
</dbReference>
<dbReference type="FunFam" id="3.90.1150.210:FF:000002">
    <property type="entry name" value="F-actin-capping protein subunit alpha"/>
    <property type="match status" value="1"/>
</dbReference>
<dbReference type="Gene3D" id="3.30.1140.60">
    <property type="entry name" value="F-actin capping protein, alpha subunit"/>
    <property type="match status" value="1"/>
</dbReference>
<dbReference type="Gene3D" id="3.90.1150.210">
    <property type="entry name" value="F-actin capping protein, beta subunit"/>
    <property type="match status" value="1"/>
</dbReference>
<dbReference type="InterPro" id="IPR002189">
    <property type="entry name" value="CapZ_alpha"/>
</dbReference>
<dbReference type="InterPro" id="IPR037282">
    <property type="entry name" value="CapZ_alpha/beta"/>
</dbReference>
<dbReference type="InterPro" id="IPR042276">
    <property type="entry name" value="CapZ_alpha/beta_2"/>
</dbReference>
<dbReference type="InterPro" id="IPR042489">
    <property type="entry name" value="CapZ_alpha_1"/>
</dbReference>
<dbReference type="InterPro" id="IPR017865">
    <property type="entry name" value="F-actin_cap_asu_CS"/>
</dbReference>
<dbReference type="PANTHER" id="PTHR10653">
    <property type="entry name" value="F-ACTIN-CAPPING PROTEIN SUBUNIT ALPHA"/>
    <property type="match status" value="1"/>
</dbReference>
<dbReference type="PANTHER" id="PTHR10653:SF2">
    <property type="entry name" value="F-ACTIN-CAPPING PROTEIN SUBUNIT ALPHA-2"/>
    <property type="match status" value="1"/>
</dbReference>
<dbReference type="Pfam" id="PF01267">
    <property type="entry name" value="F-actin_cap_A"/>
    <property type="match status" value="1"/>
</dbReference>
<dbReference type="PRINTS" id="PR00191">
    <property type="entry name" value="FACTINCAPA"/>
</dbReference>
<dbReference type="SUPFAM" id="SSF90096">
    <property type="entry name" value="Subunits of heterodimeric actin filament capping protein Capz"/>
    <property type="match status" value="1"/>
</dbReference>
<dbReference type="PROSITE" id="PS00748">
    <property type="entry name" value="F_ACTIN_CAPPING_A_1"/>
    <property type="match status" value="1"/>
</dbReference>
<dbReference type="PROSITE" id="PS00749">
    <property type="entry name" value="F_ACTIN_CAPPING_A_2"/>
    <property type="match status" value="1"/>
</dbReference>
<gene>
    <name type="primary">CAPZA2</name>
</gene>
<name>CAZA2_DIDVI</name>
<organism>
    <name type="scientific">Didelphis virginiana</name>
    <name type="common">North American opossum</name>
    <name type="synonym">Didelphis marsupialis virginiana</name>
    <dbReference type="NCBI Taxonomy" id="9267"/>
    <lineage>
        <taxon>Eukaryota</taxon>
        <taxon>Metazoa</taxon>
        <taxon>Chordata</taxon>
        <taxon>Craniata</taxon>
        <taxon>Vertebrata</taxon>
        <taxon>Euteleostomi</taxon>
        <taxon>Mammalia</taxon>
        <taxon>Metatheria</taxon>
        <taxon>Didelphimorphia</taxon>
        <taxon>Didelphidae</taxon>
        <taxon>Didelphis</taxon>
    </lineage>
</organism>